<sequence>MHPAGEKRGGRPNDKYTAEALESIKQDLTRFEVQNNHRNNQNYTPLRYTATNGRNDALTPDYHHAKQPMEPPPSASPAPDVVIPPPPAIVGQPGAGSISVSGVGVGVVGVANGRVPKMMTALMPNKLIRKPSIERDTASSHYLRCSPALDSGAGSSRSDSPHSHHTHQPSSRTVGNPGGNGGFSPSPSGFSEVAPPAPPPRNPTACSAATPPPPVPPTSQAYVKRRSPALNNRPPAIAPPTQRGNSPVITQNGLKNPQQQLTQQLKSLNLYPGGGSGAVVEPPPPYLIQGGAGGAAPPPPPPSYTASMQSRQSPTQSQQSDYRKSPSSGIYSATSAGSPSPITVSLPPAPLAKPQPRVYQARSQQPIIMQSVKSTQVQKPVLQTAVAPQSPSSASASNSPVHVLAAPPSYPQKSAAVVQQQQQAAAAAHQQQHQHQQSKPPTPTTPPLVGLNSKPNCLEPPSYAKSMQAKAATVVQQQQQQQQQQQQVQQQQVQQQQQQQQQQLQALRVLQAQAQRERDQRERDQRERERDQQKLANGNPGRQMLPPPPYQSNNNNNSEIKPPSCNNNNIQISNSNLATTPPIPPAKYNNNSSNTGANSSGGSNGSTGTTASSSTSCKKIKHASPIPERKKISKEKEEERKEFRIRQYSPQAFKFFMEQHIENVIKSYRQRTYRKNQLEKEMHKVGLPDQTQIEMRKMLNQKESNYIRLKRAKMDKSMFVKLKPIGVGAFGEVTLVSKIDTSNHLYAMKTLRKADVLKRNQVAHVKAERDILAEADNNWVVKLYYSFQDKDNLYFVMDYIPGGDLMSLLIKLGIFEEELARFYIAEVTCAVDSVHKMGFIHRDIKPDNILIDRDGHIKLTDFGLCTGFRWTHNSKYYQENGNHSRQDSMEPWEEYSENGPKPTVLERRRMRDHQRVLAHSLVGTPNYIAPEVLERSGYTQLCDYWSVGVILYEMLVGQPPFLANSPLETQQKVINWEKTLHIPPQAELSREATDLIRRLCASADKRLGKSVDEVKSHDFFKGIDFADMRKQKAPYIPEIKHPTDTSNFDPVDPEKLRSNDSTMSSGDDVDQNDRTFHGFFEFTFRRFFDDKQPPDMTDDQAPVYV</sequence>
<dbReference type="EC" id="2.7.11.1"/>
<dbReference type="EMBL" id="AE014297">
    <property type="protein sequence ID" value="AAF57085.1"/>
    <property type="molecule type" value="Genomic_DNA"/>
</dbReference>
<dbReference type="RefSeq" id="NP_733403.1">
    <property type="nucleotide sequence ID" value="NM_170524.2"/>
</dbReference>
<dbReference type="SMR" id="Q9VA38"/>
<dbReference type="BioGRID" id="68502">
    <property type="interactions" value="69"/>
</dbReference>
<dbReference type="DIP" id="DIP-20374N"/>
<dbReference type="ELM" id="Q9VA38"/>
<dbReference type="FunCoup" id="Q9VA38">
    <property type="interactions" value="132"/>
</dbReference>
<dbReference type="IntAct" id="Q9VA38">
    <property type="interactions" value="9"/>
</dbReference>
<dbReference type="STRING" id="7227.FBpp0085082"/>
<dbReference type="GlyGen" id="Q9VA38">
    <property type="glycosylation" value="2 sites"/>
</dbReference>
<dbReference type="PaxDb" id="7227-FBpp0085082"/>
<dbReference type="EnsemblMetazoa" id="FBtr0085720">
    <property type="protein sequence ID" value="FBpp0085082"/>
    <property type="gene ID" value="FBgn0011739"/>
</dbReference>
<dbReference type="GeneID" id="43651"/>
<dbReference type="KEGG" id="dme:Dmel_CG12072"/>
<dbReference type="UCSC" id="CG12072-RA">
    <property type="organism name" value="d. melanogaster"/>
</dbReference>
<dbReference type="AGR" id="FB:FBgn0011739"/>
<dbReference type="CTD" id="43651"/>
<dbReference type="FlyBase" id="FBgn0011739">
    <property type="gene designation" value="wts"/>
</dbReference>
<dbReference type="VEuPathDB" id="VectorBase:FBgn0011739"/>
<dbReference type="eggNOG" id="KOG0608">
    <property type="taxonomic scope" value="Eukaryota"/>
</dbReference>
<dbReference type="GeneTree" id="ENSGT00940000157684"/>
<dbReference type="HOGENOM" id="CLU_004885_2_0_1"/>
<dbReference type="InParanoid" id="Q9VA38"/>
<dbReference type="OMA" id="CMEPPSY"/>
<dbReference type="OrthoDB" id="3638488at2759"/>
<dbReference type="PhylomeDB" id="Q9VA38"/>
<dbReference type="Reactome" id="R-DME-2028269">
    <property type="pathway name" value="Signaling by Hippo"/>
</dbReference>
<dbReference type="Reactome" id="R-DME-390089">
    <property type="pathway name" value="Formation of the Hippo kinase cassette"/>
</dbReference>
<dbReference type="Reactome" id="R-DME-390098">
    <property type="pathway name" value="Phosphorylation-dependent inhibition of YKI"/>
</dbReference>
<dbReference type="Reactome" id="R-DME-390150">
    <property type="pathway name" value="DS ligand bound to FT receptor"/>
</dbReference>
<dbReference type="Reactome" id="R-DME-390178">
    <property type="pathway name" value="DS ligand not bound to FT receptor"/>
</dbReference>
<dbReference type="Reactome" id="R-DME-451806">
    <property type="pathway name" value="Phosphorylation-independent inhibition of YKI"/>
</dbReference>
<dbReference type="SignaLink" id="Q9VA38"/>
<dbReference type="BioGRID-ORCS" id="43651">
    <property type="hits" value="0 hits in 3 CRISPR screens"/>
</dbReference>
<dbReference type="GenomeRNAi" id="43651"/>
<dbReference type="PRO" id="PR:Q9VA38"/>
<dbReference type="Proteomes" id="UP000000803">
    <property type="component" value="Chromosome 3R"/>
</dbReference>
<dbReference type="Bgee" id="FBgn0011739">
    <property type="expression patterns" value="Expressed in adult Malpighian tubule stellate cell of main segment in Malpighian tubule and 261 other cell types or tissues"/>
</dbReference>
<dbReference type="ExpressionAtlas" id="Q9VA38">
    <property type="expression patterns" value="baseline and differential"/>
</dbReference>
<dbReference type="GO" id="GO:0106037">
    <property type="term" value="C:apicomedial cortex"/>
    <property type="evidence" value="ECO:0000314"/>
    <property type="project" value="FlyBase"/>
</dbReference>
<dbReference type="GO" id="GO:0005813">
    <property type="term" value="C:centrosome"/>
    <property type="evidence" value="ECO:0007669"/>
    <property type="project" value="UniProtKB-SubCell"/>
</dbReference>
<dbReference type="GO" id="GO:0005829">
    <property type="term" value="C:cytosol"/>
    <property type="evidence" value="ECO:0000314"/>
    <property type="project" value="FlyBase"/>
</dbReference>
<dbReference type="GO" id="GO:0005524">
    <property type="term" value="F:ATP binding"/>
    <property type="evidence" value="ECO:0007669"/>
    <property type="project" value="UniProtKB-KW"/>
</dbReference>
<dbReference type="GO" id="GO:0046872">
    <property type="term" value="F:metal ion binding"/>
    <property type="evidence" value="ECO:0007669"/>
    <property type="project" value="UniProtKB-KW"/>
</dbReference>
<dbReference type="GO" id="GO:0106310">
    <property type="term" value="F:protein serine kinase activity"/>
    <property type="evidence" value="ECO:0007669"/>
    <property type="project" value="RHEA"/>
</dbReference>
<dbReference type="GO" id="GO:0004674">
    <property type="term" value="F:protein serine/threonine kinase activity"/>
    <property type="evidence" value="ECO:0000314"/>
    <property type="project" value="FlyBase"/>
</dbReference>
<dbReference type="GO" id="GO:0007298">
    <property type="term" value="P:border follicle cell migration"/>
    <property type="evidence" value="ECO:0000315"/>
    <property type="project" value="FlyBase"/>
</dbReference>
<dbReference type="GO" id="GO:0001708">
    <property type="term" value="P:cell fate specification"/>
    <property type="evidence" value="ECO:0000315"/>
    <property type="project" value="FlyBase"/>
</dbReference>
<dbReference type="GO" id="GO:0000082">
    <property type="term" value="P:G1/S transition of mitotic cell cycle"/>
    <property type="evidence" value="ECO:0000318"/>
    <property type="project" value="GO_Central"/>
</dbReference>
<dbReference type="GO" id="GO:0035329">
    <property type="term" value="P:hippo signaling"/>
    <property type="evidence" value="ECO:0000314"/>
    <property type="project" value="FlyBase"/>
</dbReference>
<dbReference type="GO" id="GO:0007446">
    <property type="term" value="P:imaginal disc growth"/>
    <property type="evidence" value="ECO:0000315"/>
    <property type="project" value="FlyBase"/>
</dbReference>
<dbReference type="GO" id="GO:0042771">
    <property type="term" value="P:intrinsic apoptotic signaling pathway in response to DNA damage by p53 class mediator"/>
    <property type="evidence" value="ECO:0000316"/>
    <property type="project" value="FlyBase"/>
</dbReference>
<dbReference type="GO" id="GO:0090090">
    <property type="term" value="P:negative regulation of canonical Wnt signaling pathway"/>
    <property type="evidence" value="ECO:0000315"/>
    <property type="project" value="BHF-UCL"/>
</dbReference>
<dbReference type="GO" id="GO:0008285">
    <property type="term" value="P:negative regulation of cell population proliferation"/>
    <property type="evidence" value="ECO:0000315"/>
    <property type="project" value="FlyBase"/>
</dbReference>
<dbReference type="GO" id="GO:0060253">
    <property type="term" value="P:negative regulation of glial cell proliferation"/>
    <property type="evidence" value="ECO:0000315"/>
    <property type="project" value="FlyBase"/>
</dbReference>
<dbReference type="GO" id="GO:0045571">
    <property type="term" value="P:negative regulation of imaginal disc growth"/>
    <property type="evidence" value="ECO:0000315"/>
    <property type="project" value="FlyBase"/>
</dbReference>
<dbReference type="GO" id="GO:0007406">
    <property type="term" value="P:negative regulation of neuroblast proliferation"/>
    <property type="evidence" value="ECO:0000315"/>
    <property type="project" value="FlyBase"/>
</dbReference>
<dbReference type="GO" id="GO:0042308">
    <property type="term" value="P:negative regulation of protein import into nucleus"/>
    <property type="evidence" value="ECO:0000315"/>
    <property type="project" value="FlyBase"/>
</dbReference>
<dbReference type="GO" id="GO:0007424">
    <property type="term" value="P:open tracheal system development"/>
    <property type="evidence" value="ECO:0007001"/>
    <property type="project" value="FlyBase"/>
</dbReference>
<dbReference type="GO" id="GO:0043065">
    <property type="term" value="P:positive regulation of apoptotic process"/>
    <property type="evidence" value="ECO:0000316"/>
    <property type="project" value="FlyBase"/>
</dbReference>
<dbReference type="GO" id="GO:1904504">
    <property type="term" value="P:positive regulation of lipophagy"/>
    <property type="evidence" value="ECO:0000315"/>
    <property type="project" value="FlyBase"/>
</dbReference>
<dbReference type="GO" id="GO:0045463">
    <property type="term" value="P:R8 cell development"/>
    <property type="evidence" value="ECO:0000316"/>
    <property type="project" value="FlyBase"/>
</dbReference>
<dbReference type="GO" id="GO:0045464">
    <property type="term" value="P:R8 cell fate specification"/>
    <property type="evidence" value="ECO:0000315"/>
    <property type="project" value="FlyBase"/>
</dbReference>
<dbReference type="GO" id="GO:0008360">
    <property type="term" value="P:regulation of cell shape"/>
    <property type="evidence" value="ECO:0000315"/>
    <property type="project" value="FlyBase"/>
</dbReference>
<dbReference type="GO" id="GO:0048814">
    <property type="term" value="P:regulation of dendrite morphogenesis"/>
    <property type="evidence" value="ECO:0000316"/>
    <property type="project" value="FlyBase"/>
</dbReference>
<dbReference type="GO" id="GO:0046620">
    <property type="term" value="P:regulation of organ growth"/>
    <property type="evidence" value="ECO:0000318"/>
    <property type="project" value="GO_Central"/>
</dbReference>
<dbReference type="GO" id="GO:0010212">
    <property type="term" value="P:response to ionizing radiation"/>
    <property type="evidence" value="ECO:0000315"/>
    <property type="project" value="FlyBase"/>
</dbReference>
<dbReference type="GO" id="GO:0072089">
    <property type="term" value="P:stem cell proliferation"/>
    <property type="evidence" value="ECO:0000314"/>
    <property type="project" value="FlyBase"/>
</dbReference>
<dbReference type="CDD" id="cd21778">
    <property type="entry name" value="MobB_LATS1"/>
    <property type="match status" value="1"/>
</dbReference>
<dbReference type="CDD" id="cd05598">
    <property type="entry name" value="STKc_LATS"/>
    <property type="match status" value="1"/>
</dbReference>
<dbReference type="FunFam" id="3.30.200.20:FF:000391">
    <property type="entry name" value="Large tumor suppressor kinase 1"/>
    <property type="match status" value="1"/>
</dbReference>
<dbReference type="FunFam" id="1.10.510.10:FF:000086">
    <property type="entry name" value="Non-specific serine/threonine protein kinase"/>
    <property type="match status" value="1"/>
</dbReference>
<dbReference type="FunFam" id="1.10.510.10:FF:000199">
    <property type="entry name" value="Non-specific serine/threonine protein kinase"/>
    <property type="match status" value="1"/>
</dbReference>
<dbReference type="Gene3D" id="3.30.200.20">
    <property type="entry name" value="Phosphorylase Kinase, domain 1"/>
    <property type="match status" value="1"/>
</dbReference>
<dbReference type="Gene3D" id="1.10.510.10">
    <property type="entry name" value="Transferase(Phosphotransferase) domain 1"/>
    <property type="match status" value="2"/>
</dbReference>
<dbReference type="InterPro" id="IPR000961">
    <property type="entry name" value="AGC-kinase_C"/>
</dbReference>
<dbReference type="InterPro" id="IPR011009">
    <property type="entry name" value="Kinase-like_dom_sf"/>
</dbReference>
<dbReference type="InterPro" id="IPR049761">
    <property type="entry name" value="LATS1-like_MobB"/>
</dbReference>
<dbReference type="InterPro" id="IPR000719">
    <property type="entry name" value="Prot_kinase_dom"/>
</dbReference>
<dbReference type="InterPro" id="IPR017441">
    <property type="entry name" value="Protein_kinase_ATP_BS"/>
</dbReference>
<dbReference type="InterPro" id="IPR050839">
    <property type="entry name" value="Rho-assoc_Ser/Thr_Kinase"/>
</dbReference>
<dbReference type="InterPro" id="IPR008271">
    <property type="entry name" value="Ser/Thr_kinase_AS"/>
</dbReference>
<dbReference type="PANTHER" id="PTHR22988:SF76">
    <property type="entry name" value="CHROMOSOME UNDETERMINED SCAFFOLD_135, WHOLE GENOME SHOTGUN SEQUENCE"/>
    <property type="match status" value="1"/>
</dbReference>
<dbReference type="PANTHER" id="PTHR22988">
    <property type="entry name" value="MYOTONIC DYSTROPHY S/T KINASE-RELATED"/>
    <property type="match status" value="1"/>
</dbReference>
<dbReference type="Pfam" id="PF00069">
    <property type="entry name" value="Pkinase"/>
    <property type="match status" value="2"/>
</dbReference>
<dbReference type="SMART" id="SM00133">
    <property type="entry name" value="S_TK_X"/>
    <property type="match status" value="1"/>
</dbReference>
<dbReference type="SMART" id="SM00220">
    <property type="entry name" value="S_TKc"/>
    <property type="match status" value="1"/>
</dbReference>
<dbReference type="SUPFAM" id="SSF56112">
    <property type="entry name" value="Protein kinase-like (PK-like)"/>
    <property type="match status" value="1"/>
</dbReference>
<dbReference type="PROSITE" id="PS51285">
    <property type="entry name" value="AGC_KINASE_CTER"/>
    <property type="match status" value="1"/>
</dbReference>
<dbReference type="PROSITE" id="PS00107">
    <property type="entry name" value="PROTEIN_KINASE_ATP"/>
    <property type="match status" value="1"/>
</dbReference>
<dbReference type="PROSITE" id="PS50011">
    <property type="entry name" value="PROTEIN_KINASE_DOM"/>
    <property type="match status" value="1"/>
</dbReference>
<dbReference type="PROSITE" id="PS00108">
    <property type="entry name" value="PROTEIN_KINASE_ST"/>
    <property type="match status" value="1"/>
</dbReference>
<evidence type="ECO:0000250" key="1"/>
<evidence type="ECO:0000255" key="2">
    <source>
        <dbReference type="PROSITE-ProRule" id="PRU00159"/>
    </source>
</evidence>
<evidence type="ECO:0000255" key="3">
    <source>
        <dbReference type="PROSITE-ProRule" id="PRU00618"/>
    </source>
</evidence>
<evidence type="ECO:0000255" key="4">
    <source>
        <dbReference type="PROSITE-ProRule" id="PRU10027"/>
    </source>
</evidence>
<evidence type="ECO:0000256" key="5">
    <source>
        <dbReference type="SAM" id="MobiDB-lite"/>
    </source>
</evidence>
<evidence type="ECO:0000269" key="6">
    <source>
    </source>
</evidence>
<evidence type="ECO:0000269" key="7">
    <source>
    </source>
</evidence>
<evidence type="ECO:0000269" key="8">
    <source>
    </source>
</evidence>
<evidence type="ECO:0000269" key="9">
    <source>
    </source>
</evidence>
<evidence type="ECO:0000269" key="10">
    <source>
    </source>
</evidence>
<evidence type="ECO:0000305" key="11"/>
<organism>
    <name type="scientific">Drosophila melanogaster</name>
    <name type="common">Fruit fly</name>
    <dbReference type="NCBI Taxonomy" id="7227"/>
    <lineage>
        <taxon>Eukaryota</taxon>
        <taxon>Metazoa</taxon>
        <taxon>Ecdysozoa</taxon>
        <taxon>Arthropoda</taxon>
        <taxon>Hexapoda</taxon>
        <taxon>Insecta</taxon>
        <taxon>Pterygota</taxon>
        <taxon>Neoptera</taxon>
        <taxon>Endopterygota</taxon>
        <taxon>Diptera</taxon>
        <taxon>Brachycera</taxon>
        <taxon>Muscomorpha</taxon>
        <taxon>Ephydroidea</taxon>
        <taxon>Drosophilidae</taxon>
        <taxon>Drosophila</taxon>
        <taxon>Sophophora</taxon>
    </lineage>
</organism>
<comment type="function">
    <text evidence="6 8 9">Negative regulator of Yorkie (Yki) in the Hippo/SWH (Sav/Wts/Hpo) signaling pathway that plays a pivotal role in organ size control and tumor suppression by restricting proliferation and promoting apoptosis. The core of this pathway is composed of a kinase cascade wherein Hippo (Hpo), in complex with its regulatory protein Salvador (Sav), phosphorylates and activates Warts (Wts) in complex with its regulatory protein Mats, which in turn phosphorylates and inactivates the Yorkie (Yki) oncoprotein. The Hippo/SWH signaling pathway inhibits the activity of the transcriptional complex formed by Scalloped (sd) and Yki and the target genes of this pathway include cyclin-E (cycE), diap1 and bantam. Inhibits nuclear localization of Yki. Regulates salivary gland degradation in a PI3K-dependent manner and Yki- and Sd-independent, mechanism.</text>
</comment>
<comment type="catalytic activity">
    <reaction>
        <text>L-seryl-[protein] + ATP = O-phospho-L-seryl-[protein] + ADP + H(+)</text>
        <dbReference type="Rhea" id="RHEA:17989"/>
        <dbReference type="Rhea" id="RHEA-COMP:9863"/>
        <dbReference type="Rhea" id="RHEA-COMP:11604"/>
        <dbReference type="ChEBI" id="CHEBI:15378"/>
        <dbReference type="ChEBI" id="CHEBI:29999"/>
        <dbReference type="ChEBI" id="CHEBI:30616"/>
        <dbReference type="ChEBI" id="CHEBI:83421"/>
        <dbReference type="ChEBI" id="CHEBI:456216"/>
        <dbReference type="EC" id="2.7.11.1"/>
    </reaction>
</comment>
<comment type="catalytic activity">
    <reaction>
        <text>L-threonyl-[protein] + ATP = O-phospho-L-threonyl-[protein] + ADP + H(+)</text>
        <dbReference type="Rhea" id="RHEA:46608"/>
        <dbReference type="Rhea" id="RHEA-COMP:11060"/>
        <dbReference type="Rhea" id="RHEA-COMP:11605"/>
        <dbReference type="ChEBI" id="CHEBI:15378"/>
        <dbReference type="ChEBI" id="CHEBI:30013"/>
        <dbReference type="ChEBI" id="CHEBI:30616"/>
        <dbReference type="ChEBI" id="CHEBI:61977"/>
        <dbReference type="ChEBI" id="CHEBI:456216"/>
        <dbReference type="EC" id="2.7.11.1"/>
    </reaction>
</comment>
<comment type="cofactor">
    <cofactor evidence="1">
        <name>Mg(2+)</name>
        <dbReference type="ChEBI" id="CHEBI:18420"/>
    </cofactor>
</comment>
<comment type="subunit">
    <text evidence="6 10">Interacts with yki. Interacts with jub.</text>
</comment>
<comment type="interaction">
    <interactant intactId="EBI-82717">
        <id>Q9VA38</id>
    </interactant>
    <interactant intactId="EBI-180142">
        <id>Q24564</id>
        <label>Mer</label>
    </interactant>
    <organismsDiffer>false</organismsDiffer>
    <experiments>8</experiments>
</comment>
<comment type="interaction">
    <interactant intactId="EBI-82717">
        <id>Q9VA38</id>
    </interactant>
    <interactant intactId="EBI-466373">
        <id>P49657</id>
        <label>mnb</label>
    </interactant>
    <organismsDiffer>false</organismsDiffer>
    <experiments>3</experiments>
</comment>
<comment type="interaction">
    <interactant intactId="EBI-82717">
        <id>Q9VA38</id>
    </interactant>
    <interactant intactId="EBI-92828">
        <id>Q9VR53</id>
        <label>wap</label>
    </interactant>
    <organismsDiffer>false</organismsDiffer>
    <experiments>2</experiments>
</comment>
<comment type="interaction">
    <interactant intactId="EBI-82717">
        <id>Q9VA38</id>
    </interactant>
    <interactant intactId="EBI-16223133">
        <id>Q9N675</id>
        <label>Zyx</label>
    </interactant>
    <organismsDiffer>false</organismsDiffer>
    <experiments>4</experiments>
</comment>
<comment type="subcellular location">
    <subcellularLocation>
        <location evidence="7">Cytoplasm</location>
        <location evidence="7">Cytosol</location>
    </subcellularLocation>
    <subcellularLocation>
        <location evidence="7">Cytoplasm</location>
        <location evidence="7">Cytoskeleton</location>
        <location evidence="7">Microtubule organizing center</location>
        <location evidence="7">Centrosome</location>
    </subcellularLocation>
    <text>Colocalizes with mats and cyclin E at the centrosome.</text>
</comment>
<comment type="similarity">
    <text evidence="11">Belongs to the protein kinase superfamily. AGC Ser/Thr protein kinase family.</text>
</comment>
<reference key="1">
    <citation type="journal article" date="2000" name="Science">
        <title>The genome sequence of Drosophila melanogaster.</title>
        <authorList>
            <person name="Adams M.D."/>
            <person name="Celniker S.E."/>
            <person name="Holt R.A."/>
            <person name="Evans C.A."/>
            <person name="Gocayne J.D."/>
            <person name="Amanatides P.G."/>
            <person name="Scherer S.E."/>
            <person name="Li P.W."/>
            <person name="Hoskins R.A."/>
            <person name="Galle R.F."/>
            <person name="George R.A."/>
            <person name="Lewis S.E."/>
            <person name="Richards S."/>
            <person name="Ashburner M."/>
            <person name="Henderson S.N."/>
            <person name="Sutton G.G."/>
            <person name="Wortman J.R."/>
            <person name="Yandell M.D."/>
            <person name="Zhang Q."/>
            <person name="Chen L.X."/>
            <person name="Brandon R.C."/>
            <person name="Rogers Y.-H.C."/>
            <person name="Blazej R.G."/>
            <person name="Champe M."/>
            <person name="Pfeiffer B.D."/>
            <person name="Wan K.H."/>
            <person name="Doyle C."/>
            <person name="Baxter E.G."/>
            <person name="Helt G."/>
            <person name="Nelson C.R."/>
            <person name="Miklos G.L.G."/>
            <person name="Abril J.F."/>
            <person name="Agbayani A."/>
            <person name="An H.-J."/>
            <person name="Andrews-Pfannkoch C."/>
            <person name="Baldwin D."/>
            <person name="Ballew R.M."/>
            <person name="Basu A."/>
            <person name="Baxendale J."/>
            <person name="Bayraktaroglu L."/>
            <person name="Beasley E.M."/>
            <person name="Beeson K.Y."/>
            <person name="Benos P.V."/>
            <person name="Berman B.P."/>
            <person name="Bhandari D."/>
            <person name="Bolshakov S."/>
            <person name="Borkova D."/>
            <person name="Botchan M.R."/>
            <person name="Bouck J."/>
            <person name="Brokstein P."/>
            <person name="Brottier P."/>
            <person name="Burtis K.C."/>
            <person name="Busam D.A."/>
            <person name="Butler H."/>
            <person name="Cadieu E."/>
            <person name="Center A."/>
            <person name="Chandra I."/>
            <person name="Cherry J.M."/>
            <person name="Cawley S."/>
            <person name="Dahlke C."/>
            <person name="Davenport L.B."/>
            <person name="Davies P."/>
            <person name="de Pablos B."/>
            <person name="Delcher A."/>
            <person name="Deng Z."/>
            <person name="Mays A.D."/>
            <person name="Dew I."/>
            <person name="Dietz S.M."/>
            <person name="Dodson K."/>
            <person name="Doup L.E."/>
            <person name="Downes M."/>
            <person name="Dugan-Rocha S."/>
            <person name="Dunkov B.C."/>
            <person name="Dunn P."/>
            <person name="Durbin K.J."/>
            <person name="Evangelista C.C."/>
            <person name="Ferraz C."/>
            <person name="Ferriera S."/>
            <person name="Fleischmann W."/>
            <person name="Fosler C."/>
            <person name="Gabrielian A.E."/>
            <person name="Garg N.S."/>
            <person name="Gelbart W.M."/>
            <person name="Glasser K."/>
            <person name="Glodek A."/>
            <person name="Gong F."/>
            <person name="Gorrell J.H."/>
            <person name="Gu Z."/>
            <person name="Guan P."/>
            <person name="Harris M."/>
            <person name="Harris N.L."/>
            <person name="Harvey D.A."/>
            <person name="Heiman T.J."/>
            <person name="Hernandez J.R."/>
            <person name="Houck J."/>
            <person name="Hostin D."/>
            <person name="Houston K.A."/>
            <person name="Howland T.J."/>
            <person name="Wei M.-H."/>
            <person name="Ibegwam C."/>
            <person name="Jalali M."/>
            <person name="Kalush F."/>
            <person name="Karpen G.H."/>
            <person name="Ke Z."/>
            <person name="Kennison J.A."/>
            <person name="Ketchum K.A."/>
            <person name="Kimmel B.E."/>
            <person name="Kodira C.D."/>
            <person name="Kraft C.L."/>
            <person name="Kravitz S."/>
            <person name="Kulp D."/>
            <person name="Lai Z."/>
            <person name="Lasko P."/>
            <person name="Lei Y."/>
            <person name="Levitsky A.A."/>
            <person name="Li J.H."/>
            <person name="Li Z."/>
            <person name="Liang Y."/>
            <person name="Lin X."/>
            <person name="Liu X."/>
            <person name="Mattei B."/>
            <person name="McIntosh T.C."/>
            <person name="McLeod M.P."/>
            <person name="McPherson D."/>
            <person name="Merkulov G."/>
            <person name="Milshina N.V."/>
            <person name="Mobarry C."/>
            <person name="Morris J."/>
            <person name="Moshrefi A."/>
            <person name="Mount S.M."/>
            <person name="Moy M."/>
            <person name="Murphy B."/>
            <person name="Murphy L."/>
            <person name="Muzny D.M."/>
            <person name="Nelson D.L."/>
            <person name="Nelson D.R."/>
            <person name="Nelson K.A."/>
            <person name="Nixon K."/>
            <person name="Nusskern D.R."/>
            <person name="Pacleb J.M."/>
            <person name="Palazzolo M."/>
            <person name="Pittman G.S."/>
            <person name="Pan S."/>
            <person name="Pollard J."/>
            <person name="Puri V."/>
            <person name="Reese M.G."/>
            <person name="Reinert K."/>
            <person name="Remington K."/>
            <person name="Saunders R.D.C."/>
            <person name="Scheeler F."/>
            <person name="Shen H."/>
            <person name="Shue B.C."/>
            <person name="Siden-Kiamos I."/>
            <person name="Simpson M."/>
            <person name="Skupski M.P."/>
            <person name="Smith T.J."/>
            <person name="Spier E."/>
            <person name="Spradling A.C."/>
            <person name="Stapleton M."/>
            <person name="Strong R."/>
            <person name="Sun E."/>
            <person name="Svirskas R."/>
            <person name="Tector C."/>
            <person name="Turner R."/>
            <person name="Venter E."/>
            <person name="Wang A.H."/>
            <person name="Wang X."/>
            <person name="Wang Z.-Y."/>
            <person name="Wassarman D.A."/>
            <person name="Weinstock G.M."/>
            <person name="Weissenbach J."/>
            <person name="Williams S.M."/>
            <person name="Woodage T."/>
            <person name="Worley K.C."/>
            <person name="Wu D."/>
            <person name="Yang S."/>
            <person name="Yao Q.A."/>
            <person name="Ye J."/>
            <person name="Yeh R.-F."/>
            <person name="Zaveri J.S."/>
            <person name="Zhan M."/>
            <person name="Zhang G."/>
            <person name="Zhao Q."/>
            <person name="Zheng L."/>
            <person name="Zheng X.H."/>
            <person name="Zhong F.N."/>
            <person name="Zhong W."/>
            <person name="Zhou X."/>
            <person name="Zhu S.C."/>
            <person name="Zhu X."/>
            <person name="Smith H.O."/>
            <person name="Gibbs R.A."/>
            <person name="Myers E.W."/>
            <person name="Rubin G.M."/>
            <person name="Venter J.C."/>
        </authorList>
    </citation>
    <scope>NUCLEOTIDE SEQUENCE [LARGE SCALE GENOMIC DNA]</scope>
    <source>
        <strain>Berkeley</strain>
    </source>
</reference>
<reference key="2">
    <citation type="journal article" date="2002" name="Genome Biol.">
        <title>Annotation of the Drosophila melanogaster euchromatic genome: a systematic review.</title>
        <authorList>
            <person name="Misra S."/>
            <person name="Crosby M.A."/>
            <person name="Mungall C.J."/>
            <person name="Matthews B.B."/>
            <person name="Campbell K.S."/>
            <person name="Hradecky P."/>
            <person name="Huang Y."/>
            <person name="Kaminker J.S."/>
            <person name="Millburn G.H."/>
            <person name="Prochnik S.E."/>
            <person name="Smith C.D."/>
            <person name="Tupy J.L."/>
            <person name="Whitfield E.J."/>
            <person name="Bayraktaroglu L."/>
            <person name="Berman B.P."/>
            <person name="Bettencourt B.R."/>
            <person name="Celniker S.E."/>
            <person name="de Grey A.D.N.J."/>
            <person name="Drysdale R.A."/>
            <person name="Harris N.L."/>
            <person name="Richter J."/>
            <person name="Russo S."/>
            <person name="Schroeder A.J."/>
            <person name="Shu S.Q."/>
            <person name="Stapleton M."/>
            <person name="Yamada C."/>
            <person name="Ashburner M."/>
            <person name="Gelbart W.M."/>
            <person name="Rubin G.M."/>
            <person name="Lewis S.E."/>
        </authorList>
    </citation>
    <scope>GENOME REANNOTATION</scope>
    <source>
        <strain>Berkeley</strain>
    </source>
</reference>
<reference key="3">
    <citation type="journal article" date="2005" name="Cell">
        <title>The Hippo signaling pathway coordinately regulates cell proliferation and apoptosis by inactivating Yorkie, the Drosophila Homolog of YAP.</title>
        <authorList>
            <person name="Huang J."/>
            <person name="Wu S."/>
            <person name="Barrera J."/>
            <person name="Matthews K."/>
            <person name="Pan D."/>
        </authorList>
    </citation>
    <scope>FUNCTION</scope>
    <scope>INTERACTION WITH YKI</scope>
</reference>
<reference key="4">
    <citation type="journal article" date="2008" name="Curr. Biol.">
        <title>Warts is required for PI3K-regulated growth arrest, autophagy, and autophagic cell death in Drosophila.</title>
        <authorList>
            <person name="Dutta S."/>
            <person name="Baehrecke E.H."/>
        </authorList>
    </citation>
    <scope>FUNCTION</scope>
</reference>
<reference key="5">
    <citation type="journal article" date="2008" name="Development">
        <title>In vivo regulation of Yorkie phosphorylation and localization.</title>
        <authorList>
            <person name="Oh H."/>
            <person name="Irvine K.D."/>
        </authorList>
    </citation>
    <scope>FUNCTION</scope>
</reference>
<reference key="6">
    <citation type="journal article" date="2008" name="Genetics">
        <title>The mob as tumor suppressor gene is essential for early development and regulates tissue growth in Drosophila.</title>
        <authorList>
            <person name="Shimizu T."/>
            <person name="Ho L.L."/>
            <person name="Lai Z.C."/>
        </authorList>
    </citation>
    <scope>SUBCELLULAR LOCATION</scope>
</reference>
<reference key="7">
    <citation type="journal article" date="2010" name="Curr. Biol.">
        <title>Ajuba LIM proteins are negative regulators of the Hippo signaling pathway.</title>
        <authorList>
            <person name="Das Thakur M."/>
            <person name="Feng Y."/>
            <person name="Jagannathan R."/>
            <person name="Seppa M.J."/>
            <person name="Skeath J.B."/>
            <person name="Longmore G.D."/>
        </authorList>
    </citation>
    <scope>INTERACTION WITH JUB</scope>
</reference>
<accession>Q9VA38</accession>
<keyword id="KW-0067">ATP-binding</keyword>
<keyword id="KW-0963">Cytoplasm</keyword>
<keyword id="KW-0206">Cytoskeleton</keyword>
<keyword id="KW-0418">Kinase</keyword>
<keyword id="KW-0460">Magnesium</keyword>
<keyword id="KW-0479">Metal-binding</keyword>
<keyword id="KW-0547">Nucleotide-binding</keyword>
<keyword id="KW-0597">Phosphoprotein</keyword>
<keyword id="KW-1185">Reference proteome</keyword>
<keyword id="KW-0723">Serine/threonine-protein kinase</keyword>
<keyword id="KW-0808">Transferase</keyword>
<keyword id="KW-0043">Tumor suppressor</keyword>
<feature type="chain" id="PRO_0000394392" description="Serine/threonine-protein kinase Warts">
    <location>
        <begin position="1"/>
        <end position="1105"/>
    </location>
</feature>
<feature type="domain" description="Protein kinase" evidence="2">
    <location>
        <begin position="719"/>
        <end position="1020"/>
    </location>
</feature>
<feature type="domain" description="AGC-kinase C-terminal" evidence="3">
    <location>
        <begin position="1021"/>
        <end position="1091"/>
    </location>
</feature>
<feature type="region of interest" description="Disordered" evidence="5">
    <location>
        <begin position="33"/>
        <end position="81"/>
    </location>
</feature>
<feature type="region of interest" description="Disordered" evidence="5">
    <location>
        <begin position="145"/>
        <end position="253"/>
    </location>
</feature>
<feature type="region of interest" description="Disordered" evidence="5">
    <location>
        <begin position="273"/>
        <end position="362"/>
    </location>
</feature>
<feature type="region of interest" description="Disordered" evidence="5">
    <location>
        <begin position="383"/>
        <end position="462"/>
    </location>
</feature>
<feature type="region of interest" description="Disordered" evidence="5">
    <location>
        <begin position="514"/>
        <end position="643"/>
    </location>
</feature>
<feature type="region of interest" description="Disordered" evidence="5">
    <location>
        <begin position="881"/>
        <end position="900"/>
    </location>
</feature>
<feature type="region of interest" description="Disordered" evidence="5">
    <location>
        <begin position="1038"/>
        <end position="1070"/>
    </location>
</feature>
<feature type="compositionally biased region" description="Polar residues" evidence="5">
    <location>
        <begin position="33"/>
        <end position="54"/>
    </location>
</feature>
<feature type="compositionally biased region" description="Pro residues" evidence="5">
    <location>
        <begin position="69"/>
        <end position="81"/>
    </location>
</feature>
<feature type="compositionally biased region" description="Polar residues" evidence="5">
    <location>
        <begin position="242"/>
        <end position="253"/>
    </location>
</feature>
<feature type="compositionally biased region" description="Low complexity" evidence="5">
    <location>
        <begin position="307"/>
        <end position="320"/>
    </location>
</feature>
<feature type="compositionally biased region" description="Polar residues" evidence="5">
    <location>
        <begin position="325"/>
        <end position="343"/>
    </location>
</feature>
<feature type="compositionally biased region" description="Low complexity" evidence="5">
    <location>
        <begin position="387"/>
        <end position="400"/>
    </location>
</feature>
<feature type="compositionally biased region" description="Low complexity" evidence="5">
    <location>
        <begin position="415"/>
        <end position="437"/>
    </location>
</feature>
<feature type="compositionally biased region" description="Basic and acidic residues" evidence="5">
    <location>
        <begin position="515"/>
        <end position="533"/>
    </location>
</feature>
<feature type="compositionally biased region" description="Low complexity" evidence="5">
    <location>
        <begin position="551"/>
        <end position="576"/>
    </location>
</feature>
<feature type="compositionally biased region" description="Low complexity" evidence="5">
    <location>
        <begin position="589"/>
        <end position="616"/>
    </location>
</feature>
<feature type="compositionally biased region" description="Basic and acidic residues" evidence="5">
    <location>
        <begin position="627"/>
        <end position="643"/>
    </location>
</feature>
<feature type="active site" description="Proton acceptor" evidence="2 4">
    <location>
        <position position="843"/>
    </location>
</feature>
<feature type="binding site" evidence="2">
    <location>
        <begin position="725"/>
        <end position="733"/>
    </location>
    <ligand>
        <name>ATP</name>
        <dbReference type="ChEBI" id="CHEBI:30616"/>
    </ligand>
</feature>
<feature type="binding site" evidence="2">
    <location>
        <position position="749"/>
    </location>
    <ligand>
        <name>ATP</name>
        <dbReference type="ChEBI" id="CHEBI:30616"/>
    </ligand>
</feature>
<protein>
    <recommendedName>
        <fullName>Serine/threonine-protein kinase Warts</fullName>
        <ecNumber>2.7.11.1</ecNumber>
    </recommendedName>
</protein>
<gene>
    <name type="primary">wts</name>
    <name type="ORF">CG12072</name>
</gene>
<proteinExistence type="evidence at protein level"/>
<name>WARTS_DROME</name>